<evidence type="ECO:0000255" key="1">
    <source>
        <dbReference type="HAMAP-Rule" id="MF_01106"/>
    </source>
</evidence>
<sequence length="391" mass="39746">MRASSPRGFRVHHGHAGIRGSHADLAVIASDVPAAVGAVFTRSRFAAPSVLLSRDAVADGIARGVVVLSGNANAGTGPRGYEDAAEVRHLVAGIVDCDERDVLIASTGPVGERYPMSRVRAHLRAVRGPLPGADFDGAAAAVLGTAGARPTIRRARCGDATLIGVAKGPGTGPAEQDDRSTLAFFCTDAQVSPVVLDDIFRRVADRAFHGLGFGADASTGDTAAVLANGLAGRVDLVAFEQVLGALALDLVRDVVRDSGCGGALVTVRVTGAHDTEQAGRVGRAVVDAPSLRAAVHGPAPDWAPVAAVAGGHGDEGPGRSPGRITIRVGGREVFPAPRDRARPDAVTAYPHGGEVTVHIDLGVPGRAPGAFTVHGCDLLAGYPRLGAGRAV</sequence>
<name>ARGJ2_STRCL</name>
<dbReference type="EC" id="2.3.1.35" evidence="1"/>
<dbReference type="EC" id="2.3.1.1" evidence="1"/>
<dbReference type="EMBL" id="AY426768">
    <property type="protein sequence ID" value="AAR05433.1"/>
    <property type="molecule type" value="Genomic_DNA"/>
</dbReference>
<dbReference type="SMR" id="P62252"/>
<dbReference type="KEGG" id="sclf:BB341_29480"/>
<dbReference type="eggNOG" id="COG1364">
    <property type="taxonomic scope" value="Bacteria"/>
</dbReference>
<dbReference type="OrthoDB" id="9804242at2"/>
<dbReference type="UniPathway" id="UPA00068">
    <property type="reaction ID" value="UER00106"/>
</dbReference>
<dbReference type="UniPathway" id="UPA00068">
    <property type="reaction ID" value="UER00111"/>
</dbReference>
<dbReference type="GO" id="GO:0005737">
    <property type="term" value="C:cytoplasm"/>
    <property type="evidence" value="ECO:0007669"/>
    <property type="project" value="UniProtKB-SubCell"/>
</dbReference>
<dbReference type="GO" id="GO:0004358">
    <property type="term" value="F:glutamate N-acetyltransferase activity"/>
    <property type="evidence" value="ECO:0007669"/>
    <property type="project" value="UniProtKB-UniRule"/>
</dbReference>
<dbReference type="GO" id="GO:0004042">
    <property type="term" value="F:L-glutamate N-acetyltransferase activity"/>
    <property type="evidence" value="ECO:0007669"/>
    <property type="project" value="UniProtKB-UniRule"/>
</dbReference>
<dbReference type="GO" id="GO:0006526">
    <property type="term" value="P:L-arginine biosynthetic process"/>
    <property type="evidence" value="ECO:0007669"/>
    <property type="project" value="UniProtKB-UniRule"/>
</dbReference>
<dbReference type="GO" id="GO:0006592">
    <property type="term" value="P:ornithine biosynthetic process"/>
    <property type="evidence" value="ECO:0007669"/>
    <property type="project" value="TreeGrafter"/>
</dbReference>
<dbReference type="Gene3D" id="3.10.20.340">
    <property type="entry name" value="ArgJ beta chain, C-terminal domain"/>
    <property type="match status" value="1"/>
</dbReference>
<dbReference type="Gene3D" id="3.60.70.12">
    <property type="entry name" value="L-amino peptidase D-ALA esterase/amidase"/>
    <property type="match status" value="1"/>
</dbReference>
<dbReference type="HAMAP" id="MF_01106">
    <property type="entry name" value="ArgJ"/>
    <property type="match status" value="1"/>
</dbReference>
<dbReference type="InterPro" id="IPR002813">
    <property type="entry name" value="Arg_biosynth_ArgJ"/>
</dbReference>
<dbReference type="InterPro" id="IPR016117">
    <property type="entry name" value="ArgJ-like_dom_sf"/>
</dbReference>
<dbReference type="InterPro" id="IPR042195">
    <property type="entry name" value="ArgJ_beta_C"/>
</dbReference>
<dbReference type="PANTHER" id="PTHR23100">
    <property type="entry name" value="ARGININE BIOSYNTHESIS BIFUNCTIONAL PROTEIN ARGJ"/>
    <property type="match status" value="1"/>
</dbReference>
<dbReference type="PANTHER" id="PTHR23100:SF0">
    <property type="entry name" value="ARGININE BIOSYNTHESIS BIFUNCTIONAL PROTEIN ARGJ, MITOCHONDRIAL"/>
    <property type="match status" value="1"/>
</dbReference>
<dbReference type="Pfam" id="PF01960">
    <property type="entry name" value="ArgJ"/>
    <property type="match status" value="1"/>
</dbReference>
<dbReference type="SUPFAM" id="SSF56266">
    <property type="entry name" value="DmpA/ArgJ-like"/>
    <property type="match status" value="1"/>
</dbReference>
<protein>
    <recommendedName>
        <fullName evidence="1">Arginine biosynthesis bifunctional protein ArgJ 2</fullName>
    </recommendedName>
    <domain>
        <recommendedName>
            <fullName evidence="1">Glutamate N-acetyltransferase 2</fullName>
            <ecNumber evidence="1">2.3.1.35</ecNumber>
        </recommendedName>
        <alternativeName>
            <fullName evidence="1">Ornithine acetyltransferase 2</fullName>
            <shortName evidence="1">OATase 2</shortName>
        </alternativeName>
        <alternativeName>
            <fullName evidence="1">Ornithine transacetylase 2</fullName>
        </alternativeName>
    </domain>
    <domain>
        <recommendedName>
            <fullName evidence="1">Amino-acid acetyltransferase 2</fullName>
            <ecNumber evidence="1">2.3.1.1</ecNumber>
        </recommendedName>
        <alternativeName>
            <fullName evidence="1">N-acetylglutamate synthase 2</fullName>
            <shortName evidence="1">AGSase 2</shortName>
        </alternativeName>
    </domain>
    <component>
        <recommendedName>
            <fullName evidence="1">Arginine biosynthesis bifunctional protein ArgJ alpha chain 2</fullName>
        </recommendedName>
    </component>
    <component>
        <recommendedName>
            <fullName evidence="1">Arginine biosynthesis bifunctional protein ArgJ beta chain 2</fullName>
        </recommendedName>
    </component>
</protein>
<feature type="chain" id="PRO_0000419772" description="Arginine biosynthesis bifunctional protein ArgJ alpha chain 2" evidence="1">
    <location>
        <begin position="1"/>
        <end position="179"/>
    </location>
</feature>
<feature type="chain" id="PRO_0000419773" description="Arginine biosynthesis bifunctional protein ArgJ beta chain 2" evidence="1">
    <location>
        <begin position="180"/>
        <end position="391"/>
    </location>
</feature>
<feature type="active site" description="Nucleophile" evidence="1">
    <location>
        <position position="180"/>
    </location>
</feature>
<feature type="binding site" evidence="1">
    <location>
        <position position="167"/>
    </location>
    <ligand>
        <name>substrate</name>
    </ligand>
</feature>
<feature type="binding site" evidence="1">
    <location>
        <position position="180"/>
    </location>
    <ligand>
        <name>substrate</name>
    </ligand>
</feature>
<feature type="site" description="Involved in the stabilization of negative charge on the oxyanion by the formation of the oxyanion hole" evidence="1">
    <location>
        <position position="107"/>
    </location>
</feature>
<feature type="site" description="Involved in the stabilization of negative charge on the oxyanion by the formation of the oxyanion hole" evidence="1">
    <location>
        <position position="108"/>
    </location>
</feature>
<organism>
    <name type="scientific">Streptomyces clavuligerus</name>
    <dbReference type="NCBI Taxonomy" id="1901"/>
    <lineage>
        <taxon>Bacteria</taxon>
        <taxon>Bacillati</taxon>
        <taxon>Actinomycetota</taxon>
        <taxon>Actinomycetes</taxon>
        <taxon>Kitasatosporales</taxon>
        <taxon>Streptomycetaceae</taxon>
        <taxon>Streptomyces</taxon>
    </lineage>
</organism>
<keyword id="KW-0012">Acyltransferase</keyword>
<keyword id="KW-0028">Amino-acid biosynthesis</keyword>
<keyword id="KW-0055">Arginine biosynthesis</keyword>
<keyword id="KW-0068">Autocatalytic cleavage</keyword>
<keyword id="KW-0963">Cytoplasm</keyword>
<keyword id="KW-0511">Multifunctional enzyme</keyword>
<keyword id="KW-0808">Transferase</keyword>
<gene>
    <name evidence="1" type="primary">argJ2</name>
    <name type="synonym">oat1</name>
</gene>
<accession>P62252</accession>
<comment type="function">
    <text evidence="1">Catalyzes two activities which are involved in the cyclic version of arginine biosynthesis: the synthesis of N-acetylglutamate from glutamate and acetyl-CoA as the acetyl donor, and of ornithine by transacetylation between N(2)-acetylornithine and glutamate.</text>
</comment>
<comment type="catalytic activity">
    <reaction evidence="1">
        <text>N(2)-acetyl-L-ornithine + L-glutamate = N-acetyl-L-glutamate + L-ornithine</text>
        <dbReference type="Rhea" id="RHEA:15349"/>
        <dbReference type="ChEBI" id="CHEBI:29985"/>
        <dbReference type="ChEBI" id="CHEBI:44337"/>
        <dbReference type="ChEBI" id="CHEBI:46911"/>
        <dbReference type="ChEBI" id="CHEBI:57805"/>
        <dbReference type="EC" id="2.3.1.35"/>
    </reaction>
</comment>
<comment type="catalytic activity">
    <reaction evidence="1">
        <text>L-glutamate + acetyl-CoA = N-acetyl-L-glutamate + CoA + H(+)</text>
        <dbReference type="Rhea" id="RHEA:24292"/>
        <dbReference type="ChEBI" id="CHEBI:15378"/>
        <dbReference type="ChEBI" id="CHEBI:29985"/>
        <dbReference type="ChEBI" id="CHEBI:44337"/>
        <dbReference type="ChEBI" id="CHEBI:57287"/>
        <dbReference type="ChEBI" id="CHEBI:57288"/>
        <dbReference type="EC" id="2.3.1.1"/>
    </reaction>
</comment>
<comment type="pathway">
    <text evidence="1">Amino-acid biosynthesis; L-arginine biosynthesis; L-ornithine and N-acetyl-L-glutamate from L-glutamate and N(2)-acetyl-L-ornithine (cyclic): step 1/1.</text>
</comment>
<comment type="pathway">
    <text evidence="1">Amino-acid biosynthesis; L-arginine biosynthesis; N(2)-acetyl-L-ornithine from L-glutamate: step 1/4.</text>
</comment>
<comment type="subunit">
    <text evidence="1">Heterotetramer of two alpha and two beta chains.</text>
</comment>
<comment type="subcellular location">
    <subcellularLocation>
        <location evidence="1">Cytoplasm</location>
    </subcellularLocation>
</comment>
<comment type="similarity">
    <text evidence="1">Belongs to the ArgJ family.</text>
</comment>
<proteinExistence type="inferred from homology"/>
<reference key="1">
    <citation type="journal article" date="2004" name="Antimicrob. Agents Chemother.">
        <title>Two sets of paralogous genes encode the enzymes involved in the early stages of clavulanic acid and clavam metabolite biosynthesis in Streptomyces clavuligerus.</title>
        <authorList>
            <person name="Tahlan K."/>
            <person name="Park H.-U."/>
            <person name="Wong A."/>
            <person name="Beatty P.H."/>
            <person name="Jensen S.E."/>
        </authorList>
    </citation>
    <scope>NUCLEOTIDE SEQUENCE [GENOMIC DNA]</scope>
    <source>
        <strain>ATCC 27064 / DSM 738 / JCM 4710 / NBRC 13307 / NCIMB 12785 / NRRL 3585 / VKM Ac-602</strain>
    </source>
</reference>